<sequence>MKILLIGGGGREHAIAEGIKKSKHNPSLYALMAKKNPGIAALCEDFLLEKETEVEKVVEYAKARNIEMAFVGPEAPLAAGVADALWEAGIPVVGPKKSCAIIEFDKAWARNFMKKYGIEGCPEYEVFTEEKPAHDFIEKLGDVAVKPSGLTGGKGVKVMGDQLPDLKAAKAYTSELLEKGSVVIEERFIGEEFTLQAFVDGKSLVFFPAVQDHKRAYEGDLGPNTGGMGSYTDAGEILPFMLPEDLEKAKKIMQDTVKALSEETGIGYQGILYGQFILTASGPKVVEFNARFGDPEAMNVISLLETDFVDIMSAVVKGTLGNLPVSFSKKATVCKYAVPAGYPENPEKDSEVTVEDIGDASIYYASVYEKEGKVYTTSSRAIAVIGIAETIAAAEKIAQNALENLHGKLFFRKDIGTAALIQKRIDHMKELRG</sequence>
<proteinExistence type="inferred from homology"/>
<dbReference type="EC" id="6.3.4.13" evidence="2"/>
<dbReference type="EMBL" id="CP000099">
    <property type="protein sequence ID" value="AAZ72383.1"/>
    <property type="molecule type" value="Genomic_DNA"/>
</dbReference>
<dbReference type="SMR" id="Q465Q9"/>
<dbReference type="STRING" id="269797.Mbar_A3513"/>
<dbReference type="PaxDb" id="269797-Mbar_A3513"/>
<dbReference type="KEGG" id="mba:Mbar_A3513"/>
<dbReference type="eggNOG" id="arCOG04415">
    <property type="taxonomic scope" value="Archaea"/>
</dbReference>
<dbReference type="HOGENOM" id="CLU_027420_3_0_2"/>
<dbReference type="OrthoDB" id="146558at2157"/>
<dbReference type="UniPathway" id="UPA00074">
    <property type="reaction ID" value="UER00125"/>
</dbReference>
<dbReference type="GO" id="GO:0005524">
    <property type="term" value="F:ATP binding"/>
    <property type="evidence" value="ECO:0007669"/>
    <property type="project" value="UniProtKB-KW"/>
</dbReference>
<dbReference type="GO" id="GO:0046872">
    <property type="term" value="F:metal ion binding"/>
    <property type="evidence" value="ECO:0007669"/>
    <property type="project" value="UniProtKB-KW"/>
</dbReference>
<dbReference type="GO" id="GO:0004637">
    <property type="term" value="F:phosphoribosylamine-glycine ligase activity"/>
    <property type="evidence" value="ECO:0007669"/>
    <property type="project" value="UniProtKB-UniRule"/>
</dbReference>
<dbReference type="GO" id="GO:0006189">
    <property type="term" value="P:'de novo' IMP biosynthetic process"/>
    <property type="evidence" value="ECO:0007669"/>
    <property type="project" value="UniProtKB-UniRule"/>
</dbReference>
<dbReference type="GO" id="GO:0009113">
    <property type="term" value="P:purine nucleobase biosynthetic process"/>
    <property type="evidence" value="ECO:0007669"/>
    <property type="project" value="InterPro"/>
</dbReference>
<dbReference type="Gene3D" id="3.40.50.20">
    <property type="match status" value="1"/>
</dbReference>
<dbReference type="Gene3D" id="3.30.1490.20">
    <property type="entry name" value="ATP-grasp fold, A domain"/>
    <property type="match status" value="1"/>
</dbReference>
<dbReference type="Gene3D" id="3.30.470.20">
    <property type="entry name" value="ATP-grasp fold, B domain"/>
    <property type="match status" value="1"/>
</dbReference>
<dbReference type="Gene3D" id="3.90.600.10">
    <property type="entry name" value="Phosphoribosylglycinamide synthetase, C-terminal domain"/>
    <property type="match status" value="1"/>
</dbReference>
<dbReference type="HAMAP" id="MF_00138">
    <property type="entry name" value="GARS"/>
    <property type="match status" value="1"/>
</dbReference>
<dbReference type="InterPro" id="IPR011761">
    <property type="entry name" value="ATP-grasp"/>
</dbReference>
<dbReference type="InterPro" id="IPR013815">
    <property type="entry name" value="ATP_grasp_subdomain_1"/>
</dbReference>
<dbReference type="InterPro" id="IPR016185">
    <property type="entry name" value="PreATP-grasp_dom_sf"/>
</dbReference>
<dbReference type="InterPro" id="IPR020561">
    <property type="entry name" value="PRibGlycinamid_synth_ATP-grasp"/>
</dbReference>
<dbReference type="InterPro" id="IPR000115">
    <property type="entry name" value="PRibGlycinamide_synth"/>
</dbReference>
<dbReference type="InterPro" id="IPR020560">
    <property type="entry name" value="PRibGlycinamide_synth_C-dom"/>
</dbReference>
<dbReference type="InterPro" id="IPR037123">
    <property type="entry name" value="PRibGlycinamide_synth_C_sf"/>
</dbReference>
<dbReference type="InterPro" id="IPR020559">
    <property type="entry name" value="PRibGlycinamide_synth_CS"/>
</dbReference>
<dbReference type="InterPro" id="IPR020562">
    <property type="entry name" value="PRibGlycinamide_synth_N"/>
</dbReference>
<dbReference type="InterPro" id="IPR011054">
    <property type="entry name" value="Rudment_hybrid_motif"/>
</dbReference>
<dbReference type="NCBIfam" id="TIGR00877">
    <property type="entry name" value="purD"/>
    <property type="match status" value="1"/>
</dbReference>
<dbReference type="PANTHER" id="PTHR43472">
    <property type="entry name" value="PHOSPHORIBOSYLAMINE--GLYCINE LIGASE"/>
    <property type="match status" value="1"/>
</dbReference>
<dbReference type="PANTHER" id="PTHR43472:SF1">
    <property type="entry name" value="PHOSPHORIBOSYLAMINE--GLYCINE LIGASE, CHLOROPLASTIC"/>
    <property type="match status" value="1"/>
</dbReference>
<dbReference type="Pfam" id="PF01071">
    <property type="entry name" value="GARS_A"/>
    <property type="match status" value="1"/>
</dbReference>
<dbReference type="Pfam" id="PF02843">
    <property type="entry name" value="GARS_C"/>
    <property type="match status" value="1"/>
</dbReference>
<dbReference type="Pfam" id="PF02844">
    <property type="entry name" value="GARS_N"/>
    <property type="match status" value="1"/>
</dbReference>
<dbReference type="SMART" id="SM01209">
    <property type="entry name" value="GARS_A"/>
    <property type="match status" value="1"/>
</dbReference>
<dbReference type="SMART" id="SM01210">
    <property type="entry name" value="GARS_C"/>
    <property type="match status" value="1"/>
</dbReference>
<dbReference type="SUPFAM" id="SSF56059">
    <property type="entry name" value="Glutathione synthetase ATP-binding domain-like"/>
    <property type="match status" value="1"/>
</dbReference>
<dbReference type="SUPFAM" id="SSF52440">
    <property type="entry name" value="PreATP-grasp domain"/>
    <property type="match status" value="1"/>
</dbReference>
<dbReference type="SUPFAM" id="SSF51246">
    <property type="entry name" value="Rudiment single hybrid motif"/>
    <property type="match status" value="1"/>
</dbReference>
<dbReference type="PROSITE" id="PS50975">
    <property type="entry name" value="ATP_GRASP"/>
    <property type="match status" value="1"/>
</dbReference>
<dbReference type="PROSITE" id="PS00184">
    <property type="entry name" value="GARS"/>
    <property type="match status" value="1"/>
</dbReference>
<reference key="1">
    <citation type="journal article" date="2006" name="J. Bacteriol.">
        <title>The Methanosarcina barkeri genome: comparative analysis with Methanosarcina acetivorans and Methanosarcina mazei reveals extensive rearrangement within methanosarcinal genomes.</title>
        <authorList>
            <person name="Maeder D.L."/>
            <person name="Anderson I."/>
            <person name="Brettin T.S."/>
            <person name="Bruce D.C."/>
            <person name="Gilna P."/>
            <person name="Han C.S."/>
            <person name="Lapidus A."/>
            <person name="Metcalf W.W."/>
            <person name="Saunders E."/>
            <person name="Tapia R."/>
            <person name="Sowers K.R."/>
        </authorList>
    </citation>
    <scope>NUCLEOTIDE SEQUENCE [LARGE SCALE GENOMIC DNA]</scope>
    <source>
        <strain>Fusaro / DSM 804</strain>
    </source>
</reference>
<name>PUR2_METBF</name>
<gene>
    <name evidence="2" type="primary">purD</name>
    <name type="ordered locus">Mbar_A3513</name>
</gene>
<evidence type="ECO:0000250" key="1"/>
<evidence type="ECO:0000255" key="2">
    <source>
        <dbReference type="HAMAP-Rule" id="MF_00138"/>
    </source>
</evidence>
<organism>
    <name type="scientific">Methanosarcina barkeri (strain Fusaro / DSM 804)</name>
    <dbReference type="NCBI Taxonomy" id="269797"/>
    <lineage>
        <taxon>Archaea</taxon>
        <taxon>Methanobacteriati</taxon>
        <taxon>Methanobacteriota</taxon>
        <taxon>Stenosarchaea group</taxon>
        <taxon>Methanomicrobia</taxon>
        <taxon>Methanosarcinales</taxon>
        <taxon>Methanosarcinaceae</taxon>
        <taxon>Methanosarcina</taxon>
    </lineage>
</organism>
<comment type="catalytic activity">
    <reaction evidence="2">
        <text>5-phospho-beta-D-ribosylamine + glycine + ATP = N(1)-(5-phospho-beta-D-ribosyl)glycinamide + ADP + phosphate + H(+)</text>
        <dbReference type="Rhea" id="RHEA:17453"/>
        <dbReference type="ChEBI" id="CHEBI:15378"/>
        <dbReference type="ChEBI" id="CHEBI:30616"/>
        <dbReference type="ChEBI" id="CHEBI:43474"/>
        <dbReference type="ChEBI" id="CHEBI:57305"/>
        <dbReference type="ChEBI" id="CHEBI:58681"/>
        <dbReference type="ChEBI" id="CHEBI:143788"/>
        <dbReference type="ChEBI" id="CHEBI:456216"/>
        <dbReference type="EC" id="6.3.4.13"/>
    </reaction>
</comment>
<comment type="cofactor">
    <cofactor evidence="1">
        <name>Mg(2+)</name>
        <dbReference type="ChEBI" id="CHEBI:18420"/>
    </cofactor>
    <cofactor evidence="1">
        <name>Mn(2+)</name>
        <dbReference type="ChEBI" id="CHEBI:29035"/>
    </cofactor>
    <text evidence="1">Binds 2 magnesium or manganese ions per subunit.</text>
</comment>
<comment type="pathway">
    <text evidence="2">Purine metabolism; IMP biosynthesis via de novo pathway; N(1)-(5-phospho-D-ribosyl)glycinamide from 5-phospho-alpha-D-ribose 1-diphosphate: step 2/2.</text>
</comment>
<comment type="similarity">
    <text evidence="2">Belongs to the GARS family.</text>
</comment>
<feature type="chain" id="PRO_1000018821" description="Phosphoribosylamine--glycine ligase">
    <location>
        <begin position="1"/>
        <end position="433"/>
    </location>
</feature>
<feature type="domain" description="ATP-grasp" evidence="2">
    <location>
        <begin position="110"/>
        <end position="317"/>
    </location>
</feature>
<feature type="binding site" evidence="2">
    <location>
        <begin position="137"/>
        <end position="194"/>
    </location>
    <ligand>
        <name>ATP</name>
        <dbReference type="ChEBI" id="CHEBI:30616"/>
    </ligand>
</feature>
<feature type="binding site" evidence="2">
    <location>
        <position position="275"/>
    </location>
    <ligand>
        <name>Mg(2+)</name>
        <dbReference type="ChEBI" id="CHEBI:18420"/>
        <label>1</label>
    </ligand>
</feature>
<feature type="binding site" evidence="2">
    <location>
        <position position="275"/>
    </location>
    <ligand>
        <name>Mn(2+)</name>
        <dbReference type="ChEBI" id="CHEBI:29035"/>
        <label>1</label>
    </ligand>
</feature>
<feature type="binding site" evidence="2">
    <location>
        <position position="287"/>
    </location>
    <ligand>
        <name>Mg(2+)</name>
        <dbReference type="ChEBI" id="CHEBI:18420"/>
        <label>1</label>
    </ligand>
</feature>
<feature type="binding site" evidence="2">
    <location>
        <position position="287"/>
    </location>
    <ligand>
        <name>Mg(2+)</name>
        <dbReference type="ChEBI" id="CHEBI:18420"/>
        <label>2</label>
    </ligand>
</feature>
<feature type="binding site" evidence="2">
    <location>
        <position position="287"/>
    </location>
    <ligand>
        <name>Mn(2+)</name>
        <dbReference type="ChEBI" id="CHEBI:29035"/>
        <label>1</label>
    </ligand>
</feature>
<feature type="binding site" evidence="2">
    <location>
        <position position="287"/>
    </location>
    <ligand>
        <name>Mn(2+)</name>
        <dbReference type="ChEBI" id="CHEBI:29035"/>
        <label>2</label>
    </ligand>
</feature>
<feature type="binding site" evidence="2">
    <location>
        <position position="289"/>
    </location>
    <ligand>
        <name>Mg(2+)</name>
        <dbReference type="ChEBI" id="CHEBI:18420"/>
        <label>2</label>
    </ligand>
</feature>
<feature type="binding site" evidence="2">
    <location>
        <position position="289"/>
    </location>
    <ligand>
        <name>Mn(2+)</name>
        <dbReference type="ChEBI" id="CHEBI:29035"/>
        <label>2</label>
    </ligand>
</feature>
<protein>
    <recommendedName>
        <fullName evidence="2">Phosphoribosylamine--glycine ligase</fullName>
        <ecNumber evidence="2">6.3.4.13</ecNumber>
    </recommendedName>
    <alternativeName>
        <fullName evidence="2">GARS</fullName>
    </alternativeName>
    <alternativeName>
        <fullName evidence="2">Glycinamide ribonucleotide synthetase</fullName>
    </alternativeName>
    <alternativeName>
        <fullName evidence="2">Phosphoribosylglycinamide synthetase</fullName>
    </alternativeName>
</protein>
<keyword id="KW-0067">ATP-binding</keyword>
<keyword id="KW-0436">Ligase</keyword>
<keyword id="KW-0460">Magnesium</keyword>
<keyword id="KW-0464">Manganese</keyword>
<keyword id="KW-0479">Metal-binding</keyword>
<keyword id="KW-0547">Nucleotide-binding</keyword>
<keyword id="KW-0658">Purine biosynthesis</keyword>
<accession>Q465Q9</accession>